<dbReference type="EMBL" id="AL646052">
    <property type="protein sequence ID" value="CAD16723.1"/>
    <property type="molecule type" value="Genomic_DNA"/>
</dbReference>
<dbReference type="RefSeq" id="WP_011002913.1">
    <property type="nucleotide sequence ID" value="NC_003295.1"/>
</dbReference>
<dbReference type="SMR" id="Q8XV17"/>
<dbReference type="STRING" id="267608.RSc3014"/>
<dbReference type="EnsemblBacteria" id="CAD16723">
    <property type="protein sequence ID" value="CAD16723"/>
    <property type="gene ID" value="RSc3014"/>
</dbReference>
<dbReference type="GeneID" id="93851184"/>
<dbReference type="KEGG" id="rso:RSc3014"/>
<dbReference type="eggNOG" id="COG0091">
    <property type="taxonomic scope" value="Bacteria"/>
</dbReference>
<dbReference type="HOGENOM" id="CLU_083987_3_3_4"/>
<dbReference type="Proteomes" id="UP000001436">
    <property type="component" value="Chromosome"/>
</dbReference>
<dbReference type="GO" id="GO:0022625">
    <property type="term" value="C:cytosolic large ribosomal subunit"/>
    <property type="evidence" value="ECO:0007669"/>
    <property type="project" value="TreeGrafter"/>
</dbReference>
<dbReference type="GO" id="GO:0019843">
    <property type="term" value="F:rRNA binding"/>
    <property type="evidence" value="ECO:0007669"/>
    <property type="project" value="UniProtKB-UniRule"/>
</dbReference>
<dbReference type="GO" id="GO:0003735">
    <property type="term" value="F:structural constituent of ribosome"/>
    <property type="evidence" value="ECO:0007669"/>
    <property type="project" value="InterPro"/>
</dbReference>
<dbReference type="GO" id="GO:0006412">
    <property type="term" value="P:translation"/>
    <property type="evidence" value="ECO:0007669"/>
    <property type="project" value="UniProtKB-UniRule"/>
</dbReference>
<dbReference type="CDD" id="cd00336">
    <property type="entry name" value="Ribosomal_L22"/>
    <property type="match status" value="1"/>
</dbReference>
<dbReference type="FunFam" id="3.90.470.10:FF:000001">
    <property type="entry name" value="50S ribosomal protein L22"/>
    <property type="match status" value="1"/>
</dbReference>
<dbReference type="Gene3D" id="3.90.470.10">
    <property type="entry name" value="Ribosomal protein L22/L17"/>
    <property type="match status" value="1"/>
</dbReference>
<dbReference type="HAMAP" id="MF_01331_B">
    <property type="entry name" value="Ribosomal_uL22_B"/>
    <property type="match status" value="1"/>
</dbReference>
<dbReference type="InterPro" id="IPR001063">
    <property type="entry name" value="Ribosomal_uL22"/>
</dbReference>
<dbReference type="InterPro" id="IPR005727">
    <property type="entry name" value="Ribosomal_uL22_bac/chlpt-type"/>
</dbReference>
<dbReference type="InterPro" id="IPR047867">
    <property type="entry name" value="Ribosomal_uL22_bac/org-type"/>
</dbReference>
<dbReference type="InterPro" id="IPR018260">
    <property type="entry name" value="Ribosomal_uL22_CS"/>
</dbReference>
<dbReference type="InterPro" id="IPR036394">
    <property type="entry name" value="Ribosomal_uL22_sf"/>
</dbReference>
<dbReference type="NCBIfam" id="TIGR01044">
    <property type="entry name" value="rplV_bact"/>
    <property type="match status" value="1"/>
</dbReference>
<dbReference type="PANTHER" id="PTHR13501">
    <property type="entry name" value="CHLOROPLAST 50S RIBOSOMAL PROTEIN L22-RELATED"/>
    <property type="match status" value="1"/>
</dbReference>
<dbReference type="PANTHER" id="PTHR13501:SF8">
    <property type="entry name" value="LARGE RIBOSOMAL SUBUNIT PROTEIN UL22M"/>
    <property type="match status" value="1"/>
</dbReference>
<dbReference type="Pfam" id="PF00237">
    <property type="entry name" value="Ribosomal_L22"/>
    <property type="match status" value="1"/>
</dbReference>
<dbReference type="SUPFAM" id="SSF54843">
    <property type="entry name" value="Ribosomal protein L22"/>
    <property type="match status" value="1"/>
</dbReference>
<dbReference type="PROSITE" id="PS00464">
    <property type="entry name" value="RIBOSOMAL_L22"/>
    <property type="match status" value="1"/>
</dbReference>
<reference key="1">
    <citation type="journal article" date="2002" name="Nature">
        <title>Genome sequence of the plant pathogen Ralstonia solanacearum.</title>
        <authorList>
            <person name="Salanoubat M."/>
            <person name="Genin S."/>
            <person name="Artiguenave F."/>
            <person name="Gouzy J."/>
            <person name="Mangenot S."/>
            <person name="Arlat M."/>
            <person name="Billault A."/>
            <person name="Brottier P."/>
            <person name="Camus J.-C."/>
            <person name="Cattolico L."/>
            <person name="Chandler M."/>
            <person name="Choisne N."/>
            <person name="Claudel-Renard C."/>
            <person name="Cunnac S."/>
            <person name="Demange N."/>
            <person name="Gaspin C."/>
            <person name="Lavie M."/>
            <person name="Moisan A."/>
            <person name="Robert C."/>
            <person name="Saurin W."/>
            <person name="Schiex T."/>
            <person name="Siguier P."/>
            <person name="Thebault P."/>
            <person name="Whalen M."/>
            <person name="Wincker P."/>
            <person name="Levy M."/>
            <person name="Weissenbach J."/>
            <person name="Boucher C.A."/>
        </authorList>
    </citation>
    <scope>NUCLEOTIDE SEQUENCE [LARGE SCALE GENOMIC DNA]</scope>
    <source>
        <strain>ATCC BAA-1114 / GMI1000</strain>
    </source>
</reference>
<name>RL22_RALN1</name>
<keyword id="KW-1185">Reference proteome</keyword>
<keyword id="KW-0687">Ribonucleoprotein</keyword>
<keyword id="KW-0689">Ribosomal protein</keyword>
<keyword id="KW-0694">RNA-binding</keyword>
<keyword id="KW-0699">rRNA-binding</keyword>
<gene>
    <name evidence="1" type="primary">rplV</name>
    <name type="ordered locus">RSc3014</name>
    <name type="ORF">RS04743</name>
</gene>
<protein>
    <recommendedName>
        <fullName evidence="1">Large ribosomal subunit protein uL22</fullName>
    </recommendedName>
    <alternativeName>
        <fullName evidence="2">50S ribosomal protein L22</fullName>
    </alternativeName>
</protein>
<sequence length="109" mass="11958">MEVKAIHRGARISAQKTRLVADQIRGLPIERALNVLAFSPKKAAVIVKKVVESAIANAEHNEGADIDELKVKSIYIDKATSLKRFTARAKGRGNRIEKQTCHITVTLGN</sequence>
<comment type="function">
    <text evidence="1">This protein binds specifically to 23S rRNA; its binding is stimulated by other ribosomal proteins, e.g. L4, L17, and L20. It is important during the early stages of 50S assembly. It makes multiple contacts with different domains of the 23S rRNA in the assembled 50S subunit and ribosome (By similarity).</text>
</comment>
<comment type="function">
    <text evidence="1">The globular domain of the protein is located near the polypeptide exit tunnel on the outside of the subunit, while an extended beta-hairpin is found that lines the wall of the exit tunnel in the center of the 70S ribosome.</text>
</comment>
<comment type="subunit">
    <text evidence="1">Part of the 50S ribosomal subunit.</text>
</comment>
<comment type="similarity">
    <text evidence="1">Belongs to the universal ribosomal protein uL22 family.</text>
</comment>
<feature type="chain" id="PRO_0000125208" description="Large ribosomal subunit protein uL22">
    <location>
        <begin position="1"/>
        <end position="109"/>
    </location>
</feature>
<evidence type="ECO:0000255" key="1">
    <source>
        <dbReference type="HAMAP-Rule" id="MF_01331"/>
    </source>
</evidence>
<evidence type="ECO:0000305" key="2"/>
<organism>
    <name type="scientific">Ralstonia nicotianae (strain ATCC BAA-1114 / GMI1000)</name>
    <name type="common">Ralstonia solanacearum</name>
    <dbReference type="NCBI Taxonomy" id="267608"/>
    <lineage>
        <taxon>Bacteria</taxon>
        <taxon>Pseudomonadati</taxon>
        <taxon>Pseudomonadota</taxon>
        <taxon>Betaproteobacteria</taxon>
        <taxon>Burkholderiales</taxon>
        <taxon>Burkholderiaceae</taxon>
        <taxon>Ralstonia</taxon>
        <taxon>Ralstonia solanacearum species complex</taxon>
    </lineage>
</organism>
<accession>Q8XV17</accession>
<proteinExistence type="inferred from homology"/>